<dbReference type="EC" id="3.4.21.89" evidence="1"/>
<dbReference type="EMBL" id="GG692422">
    <property type="protein sequence ID" value="EER42452.1"/>
    <property type="molecule type" value="Genomic_DNA"/>
</dbReference>
<dbReference type="SMR" id="C6HB29"/>
<dbReference type="STRING" id="544712.C6HB29"/>
<dbReference type="GlyCosmos" id="C6HB29">
    <property type="glycosylation" value="2 sites, No reported glycans"/>
</dbReference>
<dbReference type="VEuPathDB" id="FungiDB:HCDG_03911"/>
<dbReference type="eggNOG" id="KOG3342">
    <property type="taxonomic scope" value="Eukaryota"/>
</dbReference>
<dbReference type="HOGENOM" id="CLU_089996_0_0_1"/>
<dbReference type="OMA" id="ILMNEYP"/>
<dbReference type="OrthoDB" id="4720at299071"/>
<dbReference type="Proteomes" id="UP000002624">
    <property type="component" value="Unassembled WGS sequence"/>
</dbReference>
<dbReference type="GO" id="GO:0005787">
    <property type="term" value="C:signal peptidase complex"/>
    <property type="evidence" value="ECO:0007669"/>
    <property type="project" value="TreeGrafter"/>
</dbReference>
<dbReference type="GO" id="GO:0004252">
    <property type="term" value="F:serine-type endopeptidase activity"/>
    <property type="evidence" value="ECO:0007669"/>
    <property type="project" value="UniProtKB-EC"/>
</dbReference>
<dbReference type="GO" id="GO:0006465">
    <property type="term" value="P:signal peptide processing"/>
    <property type="evidence" value="ECO:0007669"/>
    <property type="project" value="InterPro"/>
</dbReference>
<dbReference type="CDD" id="cd06530">
    <property type="entry name" value="S26_SPase_I"/>
    <property type="match status" value="1"/>
</dbReference>
<dbReference type="InterPro" id="IPR036286">
    <property type="entry name" value="LexA/Signal_pep-like_sf"/>
</dbReference>
<dbReference type="InterPro" id="IPR019756">
    <property type="entry name" value="Pept_S26A_signal_pept_1_Ser-AS"/>
</dbReference>
<dbReference type="InterPro" id="IPR019533">
    <property type="entry name" value="Peptidase_S26"/>
</dbReference>
<dbReference type="InterPro" id="IPR001733">
    <property type="entry name" value="Peptidase_S26B"/>
</dbReference>
<dbReference type="NCBIfam" id="TIGR02228">
    <property type="entry name" value="sigpep_I_arch"/>
    <property type="match status" value="1"/>
</dbReference>
<dbReference type="PANTHER" id="PTHR10806">
    <property type="entry name" value="SIGNAL PEPTIDASE COMPLEX CATALYTIC SUBUNIT SEC11"/>
    <property type="match status" value="1"/>
</dbReference>
<dbReference type="PANTHER" id="PTHR10806:SF6">
    <property type="entry name" value="SIGNAL PEPTIDASE COMPLEX CATALYTIC SUBUNIT SEC11"/>
    <property type="match status" value="1"/>
</dbReference>
<dbReference type="PRINTS" id="PR00728">
    <property type="entry name" value="SIGNALPTASE"/>
</dbReference>
<dbReference type="SUPFAM" id="SSF51306">
    <property type="entry name" value="LexA/Signal peptidase"/>
    <property type="match status" value="1"/>
</dbReference>
<dbReference type="PROSITE" id="PS00501">
    <property type="entry name" value="SPASE_I_1"/>
    <property type="match status" value="1"/>
</dbReference>
<accession>C6HB29</accession>
<keyword id="KW-0256">Endoplasmic reticulum</keyword>
<keyword id="KW-0325">Glycoprotein</keyword>
<keyword id="KW-0378">Hydrolase</keyword>
<keyword id="KW-0472">Membrane</keyword>
<keyword id="KW-0645">Protease</keyword>
<keyword id="KW-1185">Reference proteome</keyword>
<keyword id="KW-0735">Signal-anchor</keyword>
<keyword id="KW-0812">Transmembrane</keyword>
<keyword id="KW-1133">Transmembrane helix</keyword>
<reference key="1">
    <citation type="submission" date="2009-05" db="EMBL/GenBank/DDBJ databases">
        <title>The genome sequence of Ajellomyces capsulatus strain H143.</title>
        <authorList>
            <person name="Champion M."/>
            <person name="Cuomo C.A."/>
            <person name="Ma L.-J."/>
            <person name="Henn M.R."/>
            <person name="Sil A."/>
            <person name="Goldman B."/>
            <person name="Young S.K."/>
            <person name="Kodira C.D."/>
            <person name="Zeng Q."/>
            <person name="Koehrsen M."/>
            <person name="Alvarado L."/>
            <person name="Berlin A.M."/>
            <person name="Borenstein D."/>
            <person name="Chen Z."/>
            <person name="Engels R."/>
            <person name="Freedman E."/>
            <person name="Gellesch M."/>
            <person name="Goldberg J."/>
            <person name="Griggs A."/>
            <person name="Gujja S."/>
            <person name="Heiman D.I."/>
            <person name="Hepburn T.A."/>
            <person name="Howarth C."/>
            <person name="Jen D."/>
            <person name="Larson L."/>
            <person name="Lewis B."/>
            <person name="Mehta T."/>
            <person name="Park D."/>
            <person name="Pearson M."/>
            <person name="Roberts A."/>
            <person name="Saif S."/>
            <person name="Shea T.D."/>
            <person name="Shenoy N."/>
            <person name="Sisk P."/>
            <person name="Stolte C."/>
            <person name="Sykes S."/>
            <person name="Walk T."/>
            <person name="White J."/>
            <person name="Yandava C."/>
            <person name="Klein B."/>
            <person name="McEwen J.G."/>
            <person name="Puccia R."/>
            <person name="Goldman G.H."/>
            <person name="Felipe M.S."/>
            <person name="Nino-Vega G."/>
            <person name="San-Blas G."/>
            <person name="Taylor J.W."/>
            <person name="Mendoza L."/>
            <person name="Galagan J.E."/>
            <person name="Nusbaum C."/>
            <person name="Birren B.W."/>
        </authorList>
    </citation>
    <scope>NUCLEOTIDE SEQUENCE [LARGE SCALE GENOMIC DNA]</scope>
    <source>
        <strain>H143</strain>
    </source>
</reference>
<protein>
    <recommendedName>
        <fullName>Signal peptidase complex catalytic subunit SEC11</fullName>
        <ecNumber evidence="1">3.4.21.89</ecNumber>
    </recommendedName>
    <alternativeName>
        <fullName>Signal peptidase I</fullName>
    </alternativeName>
</protein>
<organism>
    <name type="scientific">Ajellomyces capsulatus (strain H143)</name>
    <name type="common">Darling's disease fungus</name>
    <name type="synonym">Histoplasma capsulatum</name>
    <dbReference type="NCBI Taxonomy" id="544712"/>
    <lineage>
        <taxon>Eukaryota</taxon>
        <taxon>Fungi</taxon>
        <taxon>Dikarya</taxon>
        <taxon>Ascomycota</taxon>
        <taxon>Pezizomycotina</taxon>
        <taxon>Eurotiomycetes</taxon>
        <taxon>Eurotiomycetidae</taxon>
        <taxon>Onygenales</taxon>
        <taxon>Ajellomycetaceae</taxon>
        <taxon>Histoplasma</taxon>
    </lineage>
</organism>
<evidence type="ECO:0000250" key="1">
    <source>
        <dbReference type="UniProtKB" id="P15367"/>
    </source>
</evidence>
<evidence type="ECO:0000250" key="2">
    <source>
        <dbReference type="UniProtKB" id="P67812"/>
    </source>
</evidence>
<evidence type="ECO:0000255" key="3"/>
<evidence type="ECO:0000305" key="4"/>
<gene>
    <name type="primary">SEC11</name>
    <name type="ORF">HCDG_03911</name>
</gene>
<sequence length="187" mass="20710">MLSSLSPYMANPRNTLSQVLNFGLVLSSAFMVWKTLSVITNSTSPVVVVLSGSMEPAFQRGDLLFLWNRSPRVDVGEIVVYNVQGKDIPIVHRVMRVFPDVPTTGGKDVESVEASQKLLTKGDNNLSDDTELYAPGQEFLDRKTDLMGSVRGYVPAIGYVTIMLSEHPWLKSVLLGFMGLMVMLQRE</sequence>
<proteinExistence type="inferred from homology"/>
<name>SEC11_AJECH</name>
<feature type="chain" id="PRO_0000412307" description="Signal peptidase complex catalytic subunit SEC11">
    <location>
        <begin position="1"/>
        <end position="187"/>
    </location>
</feature>
<feature type="topological domain" description="Cytoplasmic" evidence="3">
    <location>
        <begin position="1"/>
        <end position="14"/>
    </location>
</feature>
<feature type="transmembrane region" description="Helical; Signal-anchor for type II membrane protein" evidence="3">
    <location>
        <begin position="15"/>
        <end position="33"/>
    </location>
</feature>
<feature type="topological domain" description="Lumenal" evidence="3">
    <location>
        <begin position="34"/>
        <end position="187"/>
    </location>
</feature>
<feature type="region of interest" description="C-terminal short (CTS) helix" evidence="2">
    <location>
        <begin position="173"/>
        <end position="184"/>
    </location>
</feature>
<feature type="active site" description="Charge relay system" evidence="1">
    <location>
        <position position="53"/>
    </location>
</feature>
<feature type="active site" description="Charge relay system" evidence="1">
    <location>
        <position position="92"/>
    </location>
</feature>
<feature type="active site" description="Charge relay system" evidence="1">
    <location>
        <position position="129"/>
    </location>
</feature>
<feature type="glycosylation site" description="N-linked (GlcNAc...) asparagine" evidence="3">
    <location>
        <position position="41"/>
    </location>
</feature>
<feature type="glycosylation site" description="N-linked (GlcNAc...) asparagine" evidence="3">
    <location>
        <position position="125"/>
    </location>
</feature>
<comment type="function">
    <text evidence="1 2">Catalytic component of the signal peptidase complex (SPC) which catalyzes the cleavage of N-terminal signal sequences from nascent proteins as they are translocated into the lumen of the endoplasmic reticulum (By similarity). Specifically cleaves N-terminal signal peptides that contain a hydrophobic alpha-helix (h-region) shorter than 18-20 amino acids (By similarity).</text>
</comment>
<comment type="catalytic activity">
    <reaction evidence="1">
        <text>Cleavage of hydrophobic, N-terminal signal or leader sequences from secreted and periplasmic proteins.</text>
        <dbReference type="EC" id="3.4.21.89"/>
    </reaction>
</comment>
<comment type="subunit">
    <text evidence="1 2">Component of the signal peptidase complex (SPC) composed of a catalytic subunit SEC11 and three accessory subunits SPC1, SPC2 and SPC3 (By similarity). The complex induces a local thinning of the ER membrane which is used to measure the length of the signal peptide (SP) h-region of protein substrates. This ensures the selectivity of the complex towards h-regions shorter than 18-20 amino acids (By similarity). SPC associates with the translocon complex (By similarity).</text>
</comment>
<comment type="subcellular location">
    <subcellularLocation>
        <location evidence="1">Endoplasmic reticulum membrane</location>
        <topology evidence="1">Single-pass type II membrane protein</topology>
    </subcellularLocation>
</comment>
<comment type="domain">
    <text evidence="2">The C-terminal short (CTS) helix is essential for catalytic activity. It may be accommodated as a transmembrane helix in the thinned membrane environment of the complex, similarly to the signal peptide in the complex substrates.</text>
</comment>
<comment type="similarity">
    <text evidence="4">Belongs to the peptidase S26B family.</text>
</comment>